<gene>
    <name evidence="1" type="primary">rlmN</name>
    <name type="ordered locus">BCAH187_A3912</name>
</gene>
<keyword id="KW-0004">4Fe-4S</keyword>
<keyword id="KW-0963">Cytoplasm</keyword>
<keyword id="KW-1015">Disulfide bond</keyword>
<keyword id="KW-0408">Iron</keyword>
<keyword id="KW-0411">Iron-sulfur</keyword>
<keyword id="KW-0479">Metal-binding</keyword>
<keyword id="KW-0489">Methyltransferase</keyword>
<keyword id="KW-0698">rRNA processing</keyword>
<keyword id="KW-0949">S-adenosyl-L-methionine</keyword>
<keyword id="KW-0808">Transferase</keyword>
<keyword id="KW-0819">tRNA processing</keyword>
<protein>
    <recommendedName>
        <fullName evidence="1">Probable dual-specificity RNA methyltransferase RlmN</fullName>
        <ecNumber evidence="1">2.1.1.192</ecNumber>
    </recommendedName>
    <alternativeName>
        <fullName evidence="1">23S rRNA (adenine(2503)-C(2))-methyltransferase</fullName>
    </alternativeName>
    <alternativeName>
        <fullName evidence="1">23S rRNA m2A2503 methyltransferase</fullName>
    </alternativeName>
    <alternativeName>
        <fullName evidence="1">Ribosomal RNA large subunit methyltransferase N</fullName>
    </alternativeName>
    <alternativeName>
        <fullName evidence="1">tRNA (adenine(37)-C(2))-methyltransferase</fullName>
    </alternativeName>
    <alternativeName>
        <fullName evidence="1">tRNA m2A37 methyltransferase</fullName>
    </alternativeName>
</protein>
<comment type="function">
    <text evidence="1">Specifically methylates position 2 of adenine 2503 in 23S rRNA and position 2 of adenine 37 in tRNAs.</text>
</comment>
<comment type="catalytic activity">
    <reaction evidence="1">
        <text>adenosine(2503) in 23S rRNA + 2 reduced [2Fe-2S]-[ferredoxin] + 2 S-adenosyl-L-methionine = 2-methyladenosine(2503) in 23S rRNA + 5'-deoxyadenosine + L-methionine + 2 oxidized [2Fe-2S]-[ferredoxin] + S-adenosyl-L-homocysteine</text>
        <dbReference type="Rhea" id="RHEA:42916"/>
        <dbReference type="Rhea" id="RHEA-COMP:10000"/>
        <dbReference type="Rhea" id="RHEA-COMP:10001"/>
        <dbReference type="Rhea" id="RHEA-COMP:10152"/>
        <dbReference type="Rhea" id="RHEA-COMP:10282"/>
        <dbReference type="ChEBI" id="CHEBI:17319"/>
        <dbReference type="ChEBI" id="CHEBI:33737"/>
        <dbReference type="ChEBI" id="CHEBI:33738"/>
        <dbReference type="ChEBI" id="CHEBI:57844"/>
        <dbReference type="ChEBI" id="CHEBI:57856"/>
        <dbReference type="ChEBI" id="CHEBI:59789"/>
        <dbReference type="ChEBI" id="CHEBI:74411"/>
        <dbReference type="ChEBI" id="CHEBI:74497"/>
        <dbReference type="EC" id="2.1.1.192"/>
    </reaction>
</comment>
<comment type="catalytic activity">
    <reaction evidence="1">
        <text>adenosine(37) in tRNA + 2 reduced [2Fe-2S]-[ferredoxin] + 2 S-adenosyl-L-methionine = 2-methyladenosine(37) in tRNA + 5'-deoxyadenosine + L-methionine + 2 oxidized [2Fe-2S]-[ferredoxin] + S-adenosyl-L-homocysteine</text>
        <dbReference type="Rhea" id="RHEA:43332"/>
        <dbReference type="Rhea" id="RHEA-COMP:10000"/>
        <dbReference type="Rhea" id="RHEA-COMP:10001"/>
        <dbReference type="Rhea" id="RHEA-COMP:10162"/>
        <dbReference type="Rhea" id="RHEA-COMP:10485"/>
        <dbReference type="ChEBI" id="CHEBI:17319"/>
        <dbReference type="ChEBI" id="CHEBI:33737"/>
        <dbReference type="ChEBI" id="CHEBI:33738"/>
        <dbReference type="ChEBI" id="CHEBI:57844"/>
        <dbReference type="ChEBI" id="CHEBI:57856"/>
        <dbReference type="ChEBI" id="CHEBI:59789"/>
        <dbReference type="ChEBI" id="CHEBI:74411"/>
        <dbReference type="ChEBI" id="CHEBI:74497"/>
        <dbReference type="EC" id="2.1.1.192"/>
    </reaction>
</comment>
<comment type="cofactor">
    <cofactor evidence="1">
        <name>[4Fe-4S] cluster</name>
        <dbReference type="ChEBI" id="CHEBI:49883"/>
    </cofactor>
    <text evidence="1">Binds 1 [4Fe-4S] cluster. The cluster is coordinated with 3 cysteines and an exchangeable S-adenosyl-L-methionine.</text>
</comment>
<comment type="subcellular location">
    <subcellularLocation>
        <location evidence="1">Cytoplasm</location>
    </subcellularLocation>
</comment>
<comment type="miscellaneous">
    <text evidence="1">Reaction proceeds by a ping-pong mechanism involving intermediate methylation of a conserved cysteine residue.</text>
</comment>
<comment type="similarity">
    <text evidence="1">Belongs to the radical SAM superfamily. RlmN family.</text>
</comment>
<feature type="chain" id="PRO_1000188551" description="Probable dual-specificity RNA methyltransferase RlmN">
    <location>
        <begin position="1"/>
        <end position="362"/>
    </location>
</feature>
<feature type="domain" description="Radical SAM core" evidence="2">
    <location>
        <begin position="111"/>
        <end position="344"/>
    </location>
</feature>
<feature type="active site" description="Proton acceptor" evidence="1">
    <location>
        <position position="105"/>
    </location>
</feature>
<feature type="active site" description="S-methylcysteine intermediate" evidence="1">
    <location>
        <position position="349"/>
    </location>
</feature>
<feature type="binding site" evidence="1">
    <location>
        <position position="125"/>
    </location>
    <ligand>
        <name>[4Fe-4S] cluster</name>
        <dbReference type="ChEBI" id="CHEBI:49883"/>
        <note>4Fe-4S-S-AdoMet</note>
    </ligand>
</feature>
<feature type="binding site" evidence="1">
    <location>
        <position position="129"/>
    </location>
    <ligand>
        <name>[4Fe-4S] cluster</name>
        <dbReference type="ChEBI" id="CHEBI:49883"/>
        <note>4Fe-4S-S-AdoMet</note>
    </ligand>
</feature>
<feature type="binding site" evidence="1">
    <location>
        <position position="132"/>
    </location>
    <ligand>
        <name>[4Fe-4S] cluster</name>
        <dbReference type="ChEBI" id="CHEBI:49883"/>
        <note>4Fe-4S-S-AdoMet</note>
    </ligand>
</feature>
<feature type="binding site" evidence="1">
    <location>
        <begin position="175"/>
        <end position="176"/>
    </location>
    <ligand>
        <name>S-adenosyl-L-methionine</name>
        <dbReference type="ChEBI" id="CHEBI:59789"/>
    </ligand>
</feature>
<feature type="binding site" evidence="1">
    <location>
        <position position="207"/>
    </location>
    <ligand>
        <name>S-adenosyl-L-methionine</name>
        <dbReference type="ChEBI" id="CHEBI:59789"/>
    </ligand>
</feature>
<feature type="binding site" evidence="1">
    <location>
        <begin position="230"/>
        <end position="232"/>
    </location>
    <ligand>
        <name>S-adenosyl-L-methionine</name>
        <dbReference type="ChEBI" id="CHEBI:59789"/>
    </ligand>
</feature>
<feature type="binding site" evidence="1">
    <location>
        <position position="306"/>
    </location>
    <ligand>
        <name>S-adenosyl-L-methionine</name>
        <dbReference type="ChEBI" id="CHEBI:59789"/>
    </ligand>
</feature>
<feature type="disulfide bond" description="(transient)" evidence="1">
    <location>
        <begin position="118"/>
        <end position="349"/>
    </location>
</feature>
<evidence type="ECO:0000255" key="1">
    <source>
        <dbReference type="HAMAP-Rule" id="MF_01849"/>
    </source>
</evidence>
<evidence type="ECO:0000255" key="2">
    <source>
        <dbReference type="PROSITE-ProRule" id="PRU01266"/>
    </source>
</evidence>
<name>RLMN_BACC7</name>
<reference key="1">
    <citation type="submission" date="2008-10" db="EMBL/GenBank/DDBJ databases">
        <title>Genome sequence of Bacillus cereus AH187.</title>
        <authorList>
            <person name="Dodson R.J."/>
            <person name="Durkin A.S."/>
            <person name="Rosovitz M.J."/>
            <person name="Rasko D.A."/>
            <person name="Kolsto A.B."/>
            <person name="Okstad O.A."/>
            <person name="Ravel J."/>
            <person name="Sutton G."/>
        </authorList>
    </citation>
    <scope>NUCLEOTIDE SEQUENCE [LARGE SCALE GENOMIC DNA]</scope>
    <source>
        <strain>AH187</strain>
    </source>
</reference>
<accession>B7HLJ7</accession>
<dbReference type="EC" id="2.1.1.192" evidence="1"/>
<dbReference type="EMBL" id="CP001177">
    <property type="protein sequence ID" value="ACJ77298.1"/>
    <property type="molecule type" value="Genomic_DNA"/>
</dbReference>
<dbReference type="SMR" id="B7HLJ7"/>
<dbReference type="KEGG" id="bcr:BCAH187_A3912"/>
<dbReference type="HOGENOM" id="CLU_029101_0_1_9"/>
<dbReference type="Proteomes" id="UP000002214">
    <property type="component" value="Chromosome"/>
</dbReference>
<dbReference type="GO" id="GO:0005737">
    <property type="term" value="C:cytoplasm"/>
    <property type="evidence" value="ECO:0007669"/>
    <property type="project" value="UniProtKB-SubCell"/>
</dbReference>
<dbReference type="GO" id="GO:0051539">
    <property type="term" value="F:4 iron, 4 sulfur cluster binding"/>
    <property type="evidence" value="ECO:0007669"/>
    <property type="project" value="UniProtKB-UniRule"/>
</dbReference>
<dbReference type="GO" id="GO:0046872">
    <property type="term" value="F:metal ion binding"/>
    <property type="evidence" value="ECO:0007669"/>
    <property type="project" value="UniProtKB-KW"/>
</dbReference>
<dbReference type="GO" id="GO:0070040">
    <property type="term" value="F:rRNA (adenine(2503)-C2-)-methyltransferase activity"/>
    <property type="evidence" value="ECO:0007669"/>
    <property type="project" value="UniProtKB-UniRule"/>
</dbReference>
<dbReference type="GO" id="GO:0019843">
    <property type="term" value="F:rRNA binding"/>
    <property type="evidence" value="ECO:0007669"/>
    <property type="project" value="UniProtKB-UniRule"/>
</dbReference>
<dbReference type="GO" id="GO:0002935">
    <property type="term" value="F:tRNA (adenine(37)-C2)-methyltransferase activity"/>
    <property type="evidence" value="ECO:0007669"/>
    <property type="project" value="UniProtKB-UniRule"/>
</dbReference>
<dbReference type="GO" id="GO:0000049">
    <property type="term" value="F:tRNA binding"/>
    <property type="evidence" value="ECO:0007669"/>
    <property type="project" value="UniProtKB-UniRule"/>
</dbReference>
<dbReference type="GO" id="GO:0070475">
    <property type="term" value="P:rRNA base methylation"/>
    <property type="evidence" value="ECO:0007669"/>
    <property type="project" value="UniProtKB-UniRule"/>
</dbReference>
<dbReference type="GO" id="GO:0030488">
    <property type="term" value="P:tRNA methylation"/>
    <property type="evidence" value="ECO:0007669"/>
    <property type="project" value="UniProtKB-UniRule"/>
</dbReference>
<dbReference type="CDD" id="cd01335">
    <property type="entry name" value="Radical_SAM"/>
    <property type="match status" value="1"/>
</dbReference>
<dbReference type="FunFam" id="1.10.150.530:FF:000002">
    <property type="entry name" value="Probable dual-specificity RNA methyltransferase RlmN"/>
    <property type="match status" value="1"/>
</dbReference>
<dbReference type="FunFam" id="3.20.20.70:FF:000014">
    <property type="entry name" value="Probable dual-specificity RNA methyltransferase RlmN"/>
    <property type="match status" value="1"/>
</dbReference>
<dbReference type="Gene3D" id="1.10.150.530">
    <property type="match status" value="1"/>
</dbReference>
<dbReference type="Gene3D" id="3.20.20.70">
    <property type="entry name" value="Aldolase class I"/>
    <property type="match status" value="1"/>
</dbReference>
<dbReference type="HAMAP" id="MF_01849">
    <property type="entry name" value="RNA_methyltr_RlmN"/>
    <property type="match status" value="1"/>
</dbReference>
<dbReference type="InterPro" id="IPR013785">
    <property type="entry name" value="Aldolase_TIM"/>
</dbReference>
<dbReference type="InterPro" id="IPR040072">
    <property type="entry name" value="Methyltransferase_A"/>
</dbReference>
<dbReference type="InterPro" id="IPR048641">
    <property type="entry name" value="RlmN_N"/>
</dbReference>
<dbReference type="InterPro" id="IPR027492">
    <property type="entry name" value="RNA_MTrfase_RlmN"/>
</dbReference>
<dbReference type="InterPro" id="IPR004383">
    <property type="entry name" value="rRNA_lsu_MTrfase_RlmN/Cfr"/>
</dbReference>
<dbReference type="InterPro" id="IPR007197">
    <property type="entry name" value="rSAM"/>
</dbReference>
<dbReference type="NCBIfam" id="TIGR00048">
    <property type="entry name" value="rRNA_mod_RlmN"/>
    <property type="match status" value="1"/>
</dbReference>
<dbReference type="PANTHER" id="PTHR30544">
    <property type="entry name" value="23S RRNA METHYLTRANSFERASE"/>
    <property type="match status" value="1"/>
</dbReference>
<dbReference type="PANTHER" id="PTHR30544:SF5">
    <property type="entry name" value="RADICAL SAM CORE DOMAIN-CONTAINING PROTEIN"/>
    <property type="match status" value="1"/>
</dbReference>
<dbReference type="Pfam" id="PF04055">
    <property type="entry name" value="Radical_SAM"/>
    <property type="match status" value="1"/>
</dbReference>
<dbReference type="Pfam" id="PF21016">
    <property type="entry name" value="RlmN_N"/>
    <property type="match status" value="1"/>
</dbReference>
<dbReference type="PIRSF" id="PIRSF006004">
    <property type="entry name" value="CHP00048"/>
    <property type="match status" value="1"/>
</dbReference>
<dbReference type="SFLD" id="SFLDF00275">
    <property type="entry name" value="adenosine_C2_methyltransferase"/>
    <property type="match status" value="1"/>
</dbReference>
<dbReference type="SFLD" id="SFLDS00029">
    <property type="entry name" value="Radical_SAM"/>
    <property type="match status" value="1"/>
</dbReference>
<dbReference type="SUPFAM" id="SSF102114">
    <property type="entry name" value="Radical SAM enzymes"/>
    <property type="match status" value="1"/>
</dbReference>
<dbReference type="PROSITE" id="PS51918">
    <property type="entry name" value="RADICAL_SAM"/>
    <property type="match status" value="1"/>
</dbReference>
<organism>
    <name type="scientific">Bacillus cereus (strain AH187)</name>
    <dbReference type="NCBI Taxonomy" id="405534"/>
    <lineage>
        <taxon>Bacteria</taxon>
        <taxon>Bacillati</taxon>
        <taxon>Bacillota</taxon>
        <taxon>Bacilli</taxon>
        <taxon>Bacillales</taxon>
        <taxon>Bacillaceae</taxon>
        <taxon>Bacillus</taxon>
        <taxon>Bacillus cereus group</taxon>
    </lineage>
</organism>
<sequence length="362" mass="41553">METTVRKQKKNLETKKPSIYSLQLHEMQDWLKEQGEPKFRAGQIFDWLYKKRVKNYEDMSNLSKGLREKLSNSFDITTLNTLVKQTSSDGTIKFLFQLYDGYSIETVLMRHEYGNSICVTTQVGCRIGCTFCASTLGGLKRNLEAGEIVAQVVEVQRALDESEERVSSLVVMGIGEPFDNYDNLMGFLRIINHEKGLHIGARHMTVSTSGIIPKIYKFAEEDLQINFAISLHAPNSELRSKLMPINRAYKLPDLMEAIKYYVNRTGRRITFEYGLFGGENDQVEHAEELAALLKGVKCHVNLIPVNYVPERDYVRTPREQIFLFEKTLKDRGVNVTIRREQGHDIDAACGQLRAKERKEETR</sequence>
<proteinExistence type="inferred from homology"/>